<organism>
    <name type="scientific">Streptococcus gordonii (strain Challis / ATCC 35105 / BCRC 15272 / CH1 / DL1 / V288)</name>
    <dbReference type="NCBI Taxonomy" id="467705"/>
    <lineage>
        <taxon>Bacteria</taxon>
        <taxon>Bacillati</taxon>
        <taxon>Bacillota</taxon>
        <taxon>Bacilli</taxon>
        <taxon>Lactobacillales</taxon>
        <taxon>Streptococcaceae</taxon>
        <taxon>Streptococcus</taxon>
    </lineage>
</organism>
<name>SSRP_STRGC</name>
<dbReference type="EMBL" id="CP000725">
    <property type="protein sequence ID" value="ABV10118.1"/>
    <property type="molecule type" value="Genomic_DNA"/>
</dbReference>
<dbReference type="RefSeq" id="WP_002894882.1">
    <property type="nucleotide sequence ID" value="NC_009785.1"/>
</dbReference>
<dbReference type="SMR" id="A8AW61"/>
<dbReference type="STRING" id="467705.SGO_0720"/>
<dbReference type="GeneID" id="93786979"/>
<dbReference type="KEGG" id="sgo:SGO_0720"/>
<dbReference type="eggNOG" id="COG0691">
    <property type="taxonomic scope" value="Bacteria"/>
</dbReference>
<dbReference type="HOGENOM" id="CLU_108953_0_0_9"/>
<dbReference type="Proteomes" id="UP000001131">
    <property type="component" value="Chromosome"/>
</dbReference>
<dbReference type="GO" id="GO:0005829">
    <property type="term" value="C:cytosol"/>
    <property type="evidence" value="ECO:0007669"/>
    <property type="project" value="TreeGrafter"/>
</dbReference>
<dbReference type="GO" id="GO:0003723">
    <property type="term" value="F:RNA binding"/>
    <property type="evidence" value="ECO:0007669"/>
    <property type="project" value="UniProtKB-UniRule"/>
</dbReference>
<dbReference type="GO" id="GO:0070929">
    <property type="term" value="P:trans-translation"/>
    <property type="evidence" value="ECO:0007669"/>
    <property type="project" value="UniProtKB-UniRule"/>
</dbReference>
<dbReference type="CDD" id="cd09294">
    <property type="entry name" value="SmpB"/>
    <property type="match status" value="1"/>
</dbReference>
<dbReference type="Gene3D" id="2.40.280.10">
    <property type="match status" value="1"/>
</dbReference>
<dbReference type="HAMAP" id="MF_00023">
    <property type="entry name" value="SmpB"/>
    <property type="match status" value="1"/>
</dbReference>
<dbReference type="InterPro" id="IPR023620">
    <property type="entry name" value="SmpB"/>
</dbReference>
<dbReference type="InterPro" id="IPR000037">
    <property type="entry name" value="SsrA-bd_prot"/>
</dbReference>
<dbReference type="InterPro" id="IPR020081">
    <property type="entry name" value="SsrA-bd_prot_CS"/>
</dbReference>
<dbReference type="NCBIfam" id="NF003843">
    <property type="entry name" value="PRK05422.1"/>
    <property type="match status" value="1"/>
</dbReference>
<dbReference type="NCBIfam" id="TIGR00086">
    <property type="entry name" value="smpB"/>
    <property type="match status" value="1"/>
</dbReference>
<dbReference type="PANTHER" id="PTHR30308:SF2">
    <property type="entry name" value="SSRA-BINDING PROTEIN"/>
    <property type="match status" value="1"/>
</dbReference>
<dbReference type="PANTHER" id="PTHR30308">
    <property type="entry name" value="TMRNA-BINDING COMPONENT OF TRANS-TRANSLATION TAGGING COMPLEX"/>
    <property type="match status" value="1"/>
</dbReference>
<dbReference type="Pfam" id="PF01668">
    <property type="entry name" value="SmpB"/>
    <property type="match status" value="1"/>
</dbReference>
<dbReference type="SUPFAM" id="SSF74982">
    <property type="entry name" value="Small protein B (SmpB)"/>
    <property type="match status" value="1"/>
</dbReference>
<dbReference type="PROSITE" id="PS01317">
    <property type="entry name" value="SSRP"/>
    <property type="match status" value="1"/>
</dbReference>
<gene>
    <name evidence="1" type="primary">smpB</name>
    <name type="ordered locus">SGO_0720</name>
</gene>
<feature type="chain" id="PRO_1000074376" description="SsrA-binding protein">
    <location>
        <begin position="1"/>
        <end position="155"/>
    </location>
</feature>
<comment type="function">
    <text evidence="1">Required for rescue of stalled ribosomes mediated by trans-translation. Binds to transfer-messenger RNA (tmRNA), required for stable association of tmRNA with ribosomes. tmRNA and SmpB together mimic tRNA shape, replacing the anticodon stem-loop with SmpB. tmRNA is encoded by the ssrA gene; the 2 termini fold to resemble tRNA(Ala) and it encodes a 'tag peptide', a short internal open reading frame. During trans-translation Ala-aminoacylated tmRNA acts like a tRNA, entering the A-site of stalled ribosomes, displacing the stalled mRNA. The ribosome then switches to translate the ORF on the tmRNA; the nascent peptide is terminated with the 'tag peptide' encoded by the tmRNA and targeted for degradation. The ribosome is freed to recommence translation, which seems to be the essential function of trans-translation.</text>
</comment>
<comment type="subcellular location">
    <subcellularLocation>
        <location evidence="1">Cytoplasm</location>
    </subcellularLocation>
    <text evidence="1">The tmRNA-SmpB complex associates with stalled 70S ribosomes.</text>
</comment>
<comment type="similarity">
    <text evidence="1">Belongs to the SmpB family.</text>
</comment>
<sequence length="155" mass="17827">MAKGEGKVVAQNKKARHDYTIVDTIEAGMVLTGTEIKSVRAARINLKDGFAQIKNGEAWLSNVHIAPYEEGNIWNQEPERRRKLLLHKKQIQKLEQETKGTGMTLVPLKVYLKDGYAKLLLGLAKGKHDYDKRESIKRREQNRDIARQMKNFNTR</sequence>
<reference key="1">
    <citation type="journal article" date="2007" name="J. Bacteriol.">
        <title>Genome-wide transcriptional changes in Streptococcus gordonii in response to competence signaling peptide.</title>
        <authorList>
            <person name="Vickerman M.M."/>
            <person name="Iobst S."/>
            <person name="Jesionowski A.M."/>
            <person name="Gill S.R."/>
        </authorList>
    </citation>
    <scope>NUCLEOTIDE SEQUENCE [LARGE SCALE GENOMIC DNA]</scope>
    <source>
        <strain>Challis / ATCC 35105 / BCRC 15272 / CH1 / DL1 / V288</strain>
    </source>
</reference>
<accession>A8AW61</accession>
<keyword id="KW-0963">Cytoplasm</keyword>
<keyword id="KW-1185">Reference proteome</keyword>
<keyword id="KW-0694">RNA-binding</keyword>
<proteinExistence type="inferred from homology"/>
<protein>
    <recommendedName>
        <fullName evidence="1">SsrA-binding protein</fullName>
    </recommendedName>
    <alternativeName>
        <fullName evidence="1">Small protein B</fullName>
    </alternativeName>
</protein>
<evidence type="ECO:0000255" key="1">
    <source>
        <dbReference type="HAMAP-Rule" id="MF_00023"/>
    </source>
</evidence>